<sequence>MTPIVKQFKYGQHTVTLETGAIARQATAAVMASMDDTTVFVTVVAKKEVNEGQDFFPLTVDYQERTYAAGRIPGGFFKREGRPSEGETLIARLIDRPVRPLFPEGFFNEIQVIATVVSVNPQISPDLVAMIGASAALSLSGVPFNGPIGAARVGFIDNQFVLNPTTSEQRLSRLDLVVAGTDKAVLMVESEADILTEEQMLAAVVFGHEQQQVVIENIKEFVKEAGKPRWDWVAPEPNTDLINKVKALAEARLGDAYRITEKQARYEQIDAIKADVIAQLTAEDETISSGKIVDIITALESQIVRSRIIAGEPRIDGRTVDTVRALDICTGVLPRTHGSALFTRGETQALAVATLGTERDAQIIDELTGEKSDRFLFHYNFPPYSVGETGRIGSPKRREIGHGRLAKRGVLAVMPTAEEFPYVVRVVSEITESNGSSSMASVCGASLALMDAGVPIKAAVAGIAMGLVKEEEKFVVLSDILGDEDHLGDMDFKVAGTREGVTALQMDIKIEGITPEIMRIALNQAKGARMHILGVMEQAIPAPRSEISDFAPRIHTMKIDPKKIKDVIGKGGATIRALTEETGTSIDIDDDGTVKIAATDNNAAKRVMERIEEIVAEVEVNAIYKGKVTRVVDFGAFVSILGGKEGLVHISQITDARVERVADYLSVGQDVQVKVVEIERQGRIRLTMKDLNGDATAREVVEEIQELAE</sequence>
<feature type="chain" id="PRO_1000185738" description="Polyribonucleotide nucleotidyltransferase">
    <location>
        <begin position="1"/>
        <end position="709"/>
    </location>
</feature>
<feature type="domain" description="KH" evidence="1">
    <location>
        <begin position="552"/>
        <end position="611"/>
    </location>
</feature>
<feature type="domain" description="S1 motif" evidence="1">
    <location>
        <begin position="621"/>
        <end position="689"/>
    </location>
</feature>
<feature type="binding site" evidence="1">
    <location>
        <position position="485"/>
    </location>
    <ligand>
        <name>Mg(2+)</name>
        <dbReference type="ChEBI" id="CHEBI:18420"/>
    </ligand>
</feature>
<feature type="binding site" evidence="1">
    <location>
        <position position="491"/>
    </location>
    <ligand>
        <name>Mg(2+)</name>
        <dbReference type="ChEBI" id="CHEBI:18420"/>
    </ligand>
</feature>
<keyword id="KW-0963">Cytoplasm</keyword>
<keyword id="KW-0460">Magnesium</keyword>
<keyword id="KW-0479">Metal-binding</keyword>
<keyword id="KW-0548">Nucleotidyltransferase</keyword>
<keyword id="KW-1185">Reference proteome</keyword>
<keyword id="KW-0694">RNA-binding</keyword>
<keyword id="KW-0808">Transferase</keyword>
<reference key="1">
    <citation type="journal article" date="2009" name="J. Bacteriol.">
        <title>Complete genome sequence of Haemophilus parasuis SH0165.</title>
        <authorList>
            <person name="Yue M."/>
            <person name="Yang F."/>
            <person name="Yang J."/>
            <person name="Bei W."/>
            <person name="Cai X."/>
            <person name="Chen L."/>
            <person name="Dong J."/>
            <person name="Zhou R."/>
            <person name="Jin M."/>
            <person name="Jin Q."/>
            <person name="Chen H."/>
        </authorList>
    </citation>
    <scope>NUCLEOTIDE SEQUENCE [LARGE SCALE GENOMIC DNA]</scope>
    <source>
        <strain>SH0165</strain>
    </source>
</reference>
<organism>
    <name type="scientific">Glaesserella parasuis serovar 5 (strain SH0165)</name>
    <name type="common">Haemophilus parasuis</name>
    <dbReference type="NCBI Taxonomy" id="557723"/>
    <lineage>
        <taxon>Bacteria</taxon>
        <taxon>Pseudomonadati</taxon>
        <taxon>Pseudomonadota</taxon>
        <taxon>Gammaproteobacteria</taxon>
        <taxon>Pasteurellales</taxon>
        <taxon>Pasteurellaceae</taxon>
        <taxon>Glaesserella</taxon>
    </lineage>
</organism>
<proteinExistence type="inferred from homology"/>
<dbReference type="EC" id="2.7.7.8" evidence="1"/>
<dbReference type="EMBL" id="CP001321">
    <property type="protein sequence ID" value="ACL32144.1"/>
    <property type="molecule type" value="Genomic_DNA"/>
</dbReference>
<dbReference type="RefSeq" id="WP_005711570.1">
    <property type="nucleotide sequence ID" value="NC_011852.1"/>
</dbReference>
<dbReference type="SMR" id="B8F492"/>
<dbReference type="STRING" id="557723.HAPS_0476"/>
<dbReference type="GeneID" id="66618913"/>
<dbReference type="KEGG" id="hap:HAPS_0476"/>
<dbReference type="HOGENOM" id="CLU_004217_2_2_6"/>
<dbReference type="Proteomes" id="UP000006743">
    <property type="component" value="Chromosome"/>
</dbReference>
<dbReference type="GO" id="GO:0005829">
    <property type="term" value="C:cytosol"/>
    <property type="evidence" value="ECO:0007669"/>
    <property type="project" value="TreeGrafter"/>
</dbReference>
<dbReference type="GO" id="GO:0000175">
    <property type="term" value="F:3'-5'-RNA exonuclease activity"/>
    <property type="evidence" value="ECO:0007669"/>
    <property type="project" value="TreeGrafter"/>
</dbReference>
<dbReference type="GO" id="GO:0000287">
    <property type="term" value="F:magnesium ion binding"/>
    <property type="evidence" value="ECO:0007669"/>
    <property type="project" value="UniProtKB-UniRule"/>
</dbReference>
<dbReference type="GO" id="GO:0004654">
    <property type="term" value="F:polyribonucleotide nucleotidyltransferase activity"/>
    <property type="evidence" value="ECO:0007669"/>
    <property type="project" value="UniProtKB-UniRule"/>
</dbReference>
<dbReference type="GO" id="GO:0003723">
    <property type="term" value="F:RNA binding"/>
    <property type="evidence" value="ECO:0007669"/>
    <property type="project" value="UniProtKB-UniRule"/>
</dbReference>
<dbReference type="GO" id="GO:0006402">
    <property type="term" value="P:mRNA catabolic process"/>
    <property type="evidence" value="ECO:0007669"/>
    <property type="project" value="UniProtKB-UniRule"/>
</dbReference>
<dbReference type="GO" id="GO:0006396">
    <property type="term" value="P:RNA processing"/>
    <property type="evidence" value="ECO:0007669"/>
    <property type="project" value="InterPro"/>
</dbReference>
<dbReference type="CDD" id="cd02393">
    <property type="entry name" value="KH-I_PNPase"/>
    <property type="match status" value="1"/>
</dbReference>
<dbReference type="CDD" id="cd11363">
    <property type="entry name" value="RNase_PH_PNPase_1"/>
    <property type="match status" value="1"/>
</dbReference>
<dbReference type="CDD" id="cd11364">
    <property type="entry name" value="RNase_PH_PNPase_2"/>
    <property type="match status" value="1"/>
</dbReference>
<dbReference type="CDD" id="cd04472">
    <property type="entry name" value="S1_PNPase"/>
    <property type="match status" value="1"/>
</dbReference>
<dbReference type="FunFam" id="2.40.50.140:FF:000023">
    <property type="entry name" value="Polyribonucleotide nucleotidyltransferase"/>
    <property type="match status" value="1"/>
</dbReference>
<dbReference type="FunFam" id="3.30.1370.10:FF:000001">
    <property type="entry name" value="Polyribonucleotide nucleotidyltransferase"/>
    <property type="match status" value="1"/>
</dbReference>
<dbReference type="FunFam" id="3.30.230.70:FF:000001">
    <property type="entry name" value="Polyribonucleotide nucleotidyltransferase"/>
    <property type="match status" value="1"/>
</dbReference>
<dbReference type="FunFam" id="3.30.230.70:FF:000002">
    <property type="entry name" value="Polyribonucleotide nucleotidyltransferase"/>
    <property type="match status" value="1"/>
</dbReference>
<dbReference type="Gene3D" id="3.30.230.70">
    <property type="entry name" value="GHMP Kinase, N-terminal domain"/>
    <property type="match status" value="2"/>
</dbReference>
<dbReference type="Gene3D" id="3.30.1370.10">
    <property type="entry name" value="K Homology domain, type 1"/>
    <property type="match status" value="1"/>
</dbReference>
<dbReference type="Gene3D" id="2.40.50.140">
    <property type="entry name" value="Nucleic acid-binding proteins"/>
    <property type="match status" value="1"/>
</dbReference>
<dbReference type="HAMAP" id="MF_01595">
    <property type="entry name" value="PNPase"/>
    <property type="match status" value="1"/>
</dbReference>
<dbReference type="InterPro" id="IPR001247">
    <property type="entry name" value="ExoRNase_PH_dom1"/>
</dbReference>
<dbReference type="InterPro" id="IPR015847">
    <property type="entry name" value="ExoRNase_PH_dom2"/>
</dbReference>
<dbReference type="InterPro" id="IPR036345">
    <property type="entry name" value="ExoRNase_PH_dom2_sf"/>
</dbReference>
<dbReference type="InterPro" id="IPR004087">
    <property type="entry name" value="KH_dom"/>
</dbReference>
<dbReference type="InterPro" id="IPR004088">
    <property type="entry name" value="KH_dom_type_1"/>
</dbReference>
<dbReference type="InterPro" id="IPR036612">
    <property type="entry name" value="KH_dom_type_1_sf"/>
</dbReference>
<dbReference type="InterPro" id="IPR012340">
    <property type="entry name" value="NA-bd_OB-fold"/>
</dbReference>
<dbReference type="InterPro" id="IPR012162">
    <property type="entry name" value="PNPase"/>
</dbReference>
<dbReference type="InterPro" id="IPR027408">
    <property type="entry name" value="PNPase/RNase_PH_dom_sf"/>
</dbReference>
<dbReference type="InterPro" id="IPR015848">
    <property type="entry name" value="PNPase_PH_RNA-bd_bac/org-type"/>
</dbReference>
<dbReference type="InterPro" id="IPR020568">
    <property type="entry name" value="Ribosomal_Su5_D2-typ_SF"/>
</dbReference>
<dbReference type="InterPro" id="IPR003029">
    <property type="entry name" value="S1_domain"/>
</dbReference>
<dbReference type="NCBIfam" id="TIGR03591">
    <property type="entry name" value="polynuc_phos"/>
    <property type="match status" value="1"/>
</dbReference>
<dbReference type="NCBIfam" id="NF008805">
    <property type="entry name" value="PRK11824.1"/>
    <property type="match status" value="1"/>
</dbReference>
<dbReference type="PANTHER" id="PTHR11252">
    <property type="entry name" value="POLYRIBONUCLEOTIDE NUCLEOTIDYLTRANSFERASE"/>
    <property type="match status" value="1"/>
</dbReference>
<dbReference type="PANTHER" id="PTHR11252:SF0">
    <property type="entry name" value="POLYRIBONUCLEOTIDE NUCLEOTIDYLTRANSFERASE 1, MITOCHONDRIAL"/>
    <property type="match status" value="1"/>
</dbReference>
<dbReference type="Pfam" id="PF00013">
    <property type="entry name" value="KH_1"/>
    <property type="match status" value="1"/>
</dbReference>
<dbReference type="Pfam" id="PF03726">
    <property type="entry name" value="PNPase"/>
    <property type="match status" value="1"/>
</dbReference>
<dbReference type="Pfam" id="PF01138">
    <property type="entry name" value="RNase_PH"/>
    <property type="match status" value="2"/>
</dbReference>
<dbReference type="Pfam" id="PF03725">
    <property type="entry name" value="RNase_PH_C"/>
    <property type="match status" value="2"/>
</dbReference>
<dbReference type="Pfam" id="PF00575">
    <property type="entry name" value="S1"/>
    <property type="match status" value="1"/>
</dbReference>
<dbReference type="PIRSF" id="PIRSF005499">
    <property type="entry name" value="PNPase"/>
    <property type="match status" value="1"/>
</dbReference>
<dbReference type="SMART" id="SM00322">
    <property type="entry name" value="KH"/>
    <property type="match status" value="1"/>
</dbReference>
<dbReference type="SMART" id="SM00316">
    <property type="entry name" value="S1"/>
    <property type="match status" value="1"/>
</dbReference>
<dbReference type="SUPFAM" id="SSF54791">
    <property type="entry name" value="Eukaryotic type KH-domain (KH-domain type I)"/>
    <property type="match status" value="1"/>
</dbReference>
<dbReference type="SUPFAM" id="SSF50249">
    <property type="entry name" value="Nucleic acid-binding proteins"/>
    <property type="match status" value="1"/>
</dbReference>
<dbReference type="SUPFAM" id="SSF55666">
    <property type="entry name" value="Ribonuclease PH domain 2-like"/>
    <property type="match status" value="2"/>
</dbReference>
<dbReference type="SUPFAM" id="SSF54211">
    <property type="entry name" value="Ribosomal protein S5 domain 2-like"/>
    <property type="match status" value="2"/>
</dbReference>
<dbReference type="PROSITE" id="PS50084">
    <property type="entry name" value="KH_TYPE_1"/>
    <property type="match status" value="1"/>
</dbReference>
<dbReference type="PROSITE" id="PS50126">
    <property type="entry name" value="S1"/>
    <property type="match status" value="1"/>
</dbReference>
<name>PNP_GLAP5</name>
<comment type="function">
    <text evidence="1">Involved in mRNA degradation. Catalyzes the phosphorolysis of single-stranded polyribonucleotides processively in the 3'- to 5'-direction.</text>
</comment>
<comment type="catalytic activity">
    <reaction evidence="1">
        <text>RNA(n+1) + phosphate = RNA(n) + a ribonucleoside 5'-diphosphate</text>
        <dbReference type="Rhea" id="RHEA:22096"/>
        <dbReference type="Rhea" id="RHEA-COMP:14527"/>
        <dbReference type="Rhea" id="RHEA-COMP:17342"/>
        <dbReference type="ChEBI" id="CHEBI:43474"/>
        <dbReference type="ChEBI" id="CHEBI:57930"/>
        <dbReference type="ChEBI" id="CHEBI:140395"/>
        <dbReference type="EC" id="2.7.7.8"/>
    </reaction>
</comment>
<comment type="cofactor">
    <cofactor evidence="1">
        <name>Mg(2+)</name>
        <dbReference type="ChEBI" id="CHEBI:18420"/>
    </cofactor>
</comment>
<comment type="subunit">
    <text evidence="1">Component of the RNA degradosome, which is a multiprotein complex involved in RNA processing and mRNA degradation.</text>
</comment>
<comment type="subcellular location">
    <subcellularLocation>
        <location evidence="1">Cytoplasm</location>
    </subcellularLocation>
</comment>
<comment type="similarity">
    <text evidence="1">Belongs to the polyribonucleotide nucleotidyltransferase family.</text>
</comment>
<evidence type="ECO:0000255" key="1">
    <source>
        <dbReference type="HAMAP-Rule" id="MF_01595"/>
    </source>
</evidence>
<gene>
    <name evidence="1" type="primary">pnp</name>
    <name type="ordered locus">HAPS_0476</name>
</gene>
<accession>B8F492</accession>
<protein>
    <recommendedName>
        <fullName evidence="1">Polyribonucleotide nucleotidyltransferase</fullName>
        <ecNumber evidence="1">2.7.7.8</ecNumber>
    </recommendedName>
    <alternativeName>
        <fullName evidence="1">Polynucleotide phosphorylase</fullName>
        <shortName evidence="1">PNPase</shortName>
    </alternativeName>
</protein>